<dbReference type="EC" id="2.7.1.39" evidence="1"/>
<dbReference type="EMBL" id="CP000633">
    <property type="protein sequence ID" value="ACM35752.1"/>
    <property type="molecule type" value="Genomic_DNA"/>
</dbReference>
<dbReference type="RefSeq" id="WP_015915176.1">
    <property type="nucleotide sequence ID" value="NC_011989.1"/>
</dbReference>
<dbReference type="SMR" id="B9JT39"/>
<dbReference type="STRING" id="311402.Avi_1059"/>
<dbReference type="KEGG" id="avi:Avi_1059"/>
<dbReference type="eggNOG" id="COG2334">
    <property type="taxonomic scope" value="Bacteria"/>
</dbReference>
<dbReference type="HOGENOM" id="CLU_053300_1_0_5"/>
<dbReference type="UniPathway" id="UPA00050">
    <property type="reaction ID" value="UER00064"/>
</dbReference>
<dbReference type="Proteomes" id="UP000001596">
    <property type="component" value="Chromosome 1"/>
</dbReference>
<dbReference type="GO" id="GO:0005524">
    <property type="term" value="F:ATP binding"/>
    <property type="evidence" value="ECO:0007669"/>
    <property type="project" value="UniProtKB-KW"/>
</dbReference>
<dbReference type="GO" id="GO:0004413">
    <property type="term" value="F:homoserine kinase activity"/>
    <property type="evidence" value="ECO:0007669"/>
    <property type="project" value="UniProtKB-UniRule"/>
</dbReference>
<dbReference type="GO" id="GO:0009088">
    <property type="term" value="P:threonine biosynthetic process"/>
    <property type="evidence" value="ECO:0007669"/>
    <property type="project" value="UniProtKB-UniRule"/>
</dbReference>
<dbReference type="CDD" id="cd05153">
    <property type="entry name" value="HomoserineK_II"/>
    <property type="match status" value="1"/>
</dbReference>
<dbReference type="Gene3D" id="3.90.1200.10">
    <property type="match status" value="1"/>
</dbReference>
<dbReference type="Gene3D" id="3.30.200.20">
    <property type="entry name" value="Phosphorylase Kinase, domain 1"/>
    <property type="match status" value="1"/>
</dbReference>
<dbReference type="HAMAP" id="MF_00301">
    <property type="entry name" value="Homoser_kinase_2"/>
    <property type="match status" value="1"/>
</dbReference>
<dbReference type="InterPro" id="IPR002575">
    <property type="entry name" value="Aminoglycoside_PTrfase"/>
</dbReference>
<dbReference type="InterPro" id="IPR005280">
    <property type="entry name" value="Homoserine_kinase_II"/>
</dbReference>
<dbReference type="InterPro" id="IPR011009">
    <property type="entry name" value="Kinase-like_dom_sf"/>
</dbReference>
<dbReference type="InterPro" id="IPR050249">
    <property type="entry name" value="Pseudomonas-type_ThrB"/>
</dbReference>
<dbReference type="NCBIfam" id="NF003558">
    <property type="entry name" value="PRK05231.1"/>
    <property type="match status" value="1"/>
</dbReference>
<dbReference type="NCBIfam" id="TIGR00938">
    <property type="entry name" value="thrB_alt"/>
    <property type="match status" value="1"/>
</dbReference>
<dbReference type="PANTHER" id="PTHR21064:SF6">
    <property type="entry name" value="AMINOGLYCOSIDE PHOSPHOTRANSFERASE DOMAIN-CONTAINING PROTEIN"/>
    <property type="match status" value="1"/>
</dbReference>
<dbReference type="PANTHER" id="PTHR21064">
    <property type="entry name" value="AMINOGLYCOSIDE PHOSPHOTRANSFERASE DOMAIN-CONTAINING PROTEIN-RELATED"/>
    <property type="match status" value="1"/>
</dbReference>
<dbReference type="Pfam" id="PF01636">
    <property type="entry name" value="APH"/>
    <property type="match status" value="1"/>
</dbReference>
<dbReference type="SUPFAM" id="SSF56112">
    <property type="entry name" value="Protein kinase-like (PK-like)"/>
    <property type="match status" value="1"/>
</dbReference>
<gene>
    <name evidence="1" type="primary">thrB</name>
    <name type="ordered locus">Avi_1059</name>
</gene>
<sequence>MAVYTDINEVDLKDFLAHYDTGELLSFKGIAEGVENSNFLLHTTKGALILTLYEKRVEKDDLPFFLGLMHHLSAKGLNCPLPLPRKDGALLGELSGRPAALISFLEGMWLRKPETQHCRAVGEALATMHLAAEGFALRRDNALDLAGWQALWPKARARADEVSPGLKAEIDAELVHLAGQWPKDLPAGVIHADLFPDNVFFLGDQLSGLIDFYFACNDFLAYDLSICLNAWCFEKDGSYNITKGKAMIDGYLAVRSLSPAEVAAMPVLCRGSALRFLLTRLYDWLTTPEGAMVVKKEPLEYLRKLRFHQAVETAAEYGWPQ</sequence>
<evidence type="ECO:0000255" key="1">
    <source>
        <dbReference type="HAMAP-Rule" id="MF_00301"/>
    </source>
</evidence>
<keyword id="KW-0028">Amino-acid biosynthesis</keyword>
<keyword id="KW-0067">ATP-binding</keyword>
<keyword id="KW-0418">Kinase</keyword>
<keyword id="KW-0547">Nucleotide-binding</keyword>
<keyword id="KW-1185">Reference proteome</keyword>
<keyword id="KW-0791">Threonine biosynthesis</keyword>
<keyword id="KW-0808">Transferase</keyword>
<reference key="1">
    <citation type="journal article" date="2009" name="J. Bacteriol.">
        <title>Genome sequences of three Agrobacterium biovars help elucidate the evolution of multichromosome genomes in bacteria.</title>
        <authorList>
            <person name="Slater S.C."/>
            <person name="Goldman B.S."/>
            <person name="Goodner B."/>
            <person name="Setubal J.C."/>
            <person name="Farrand S.K."/>
            <person name="Nester E.W."/>
            <person name="Burr T.J."/>
            <person name="Banta L."/>
            <person name="Dickerman A.W."/>
            <person name="Paulsen I."/>
            <person name="Otten L."/>
            <person name="Suen G."/>
            <person name="Welch R."/>
            <person name="Almeida N.F."/>
            <person name="Arnold F."/>
            <person name="Burton O.T."/>
            <person name="Du Z."/>
            <person name="Ewing A."/>
            <person name="Godsy E."/>
            <person name="Heisel S."/>
            <person name="Houmiel K.L."/>
            <person name="Jhaveri J."/>
            <person name="Lu J."/>
            <person name="Miller N.M."/>
            <person name="Norton S."/>
            <person name="Chen Q."/>
            <person name="Phoolcharoen W."/>
            <person name="Ohlin V."/>
            <person name="Ondrusek D."/>
            <person name="Pride N."/>
            <person name="Stricklin S.L."/>
            <person name="Sun J."/>
            <person name="Wheeler C."/>
            <person name="Wilson L."/>
            <person name="Zhu H."/>
            <person name="Wood D.W."/>
        </authorList>
    </citation>
    <scope>NUCLEOTIDE SEQUENCE [LARGE SCALE GENOMIC DNA]</scope>
    <source>
        <strain>ATCC BAA-846 / DSM 112012 / S4</strain>
    </source>
</reference>
<feature type="chain" id="PRO_1000196942" description="Homoserine kinase">
    <location>
        <begin position="1"/>
        <end position="321"/>
    </location>
</feature>
<comment type="catalytic activity">
    <reaction evidence="1">
        <text>L-homoserine + ATP = O-phospho-L-homoserine + ADP + H(+)</text>
        <dbReference type="Rhea" id="RHEA:13985"/>
        <dbReference type="ChEBI" id="CHEBI:15378"/>
        <dbReference type="ChEBI" id="CHEBI:30616"/>
        <dbReference type="ChEBI" id="CHEBI:57476"/>
        <dbReference type="ChEBI" id="CHEBI:57590"/>
        <dbReference type="ChEBI" id="CHEBI:456216"/>
        <dbReference type="EC" id="2.7.1.39"/>
    </reaction>
</comment>
<comment type="pathway">
    <text evidence="1">Amino-acid biosynthesis; L-threonine biosynthesis; L-threonine from L-aspartate: step 4/5.</text>
</comment>
<comment type="similarity">
    <text evidence="1">Belongs to the pseudomonas-type ThrB family.</text>
</comment>
<accession>B9JT39</accession>
<protein>
    <recommendedName>
        <fullName evidence="1">Homoserine kinase</fullName>
        <shortName evidence="1">HK</shortName>
        <shortName evidence="1">HSK</shortName>
        <ecNumber evidence="1">2.7.1.39</ecNumber>
    </recommendedName>
</protein>
<proteinExistence type="inferred from homology"/>
<name>KHSE_ALLAM</name>
<organism>
    <name type="scientific">Allorhizobium ampelinum (strain ATCC BAA-846 / DSM 112012 / S4)</name>
    <name type="common">Agrobacterium vitis (strain S4)</name>
    <dbReference type="NCBI Taxonomy" id="311402"/>
    <lineage>
        <taxon>Bacteria</taxon>
        <taxon>Pseudomonadati</taxon>
        <taxon>Pseudomonadota</taxon>
        <taxon>Alphaproteobacteria</taxon>
        <taxon>Hyphomicrobiales</taxon>
        <taxon>Rhizobiaceae</taxon>
        <taxon>Rhizobium/Agrobacterium group</taxon>
        <taxon>Allorhizobium</taxon>
        <taxon>Allorhizobium ampelinum</taxon>
    </lineage>
</organism>